<reference key="1">
    <citation type="journal article" date="2010" name="J. Bacteriol.">
        <title>Genome sequence of the Fleming strain of Micrococcus luteus, a simple free-living actinobacterium.</title>
        <authorList>
            <person name="Young M."/>
            <person name="Artsatbanov V."/>
            <person name="Beller H.R."/>
            <person name="Chandra G."/>
            <person name="Chater K.F."/>
            <person name="Dover L.G."/>
            <person name="Goh E.B."/>
            <person name="Kahan T."/>
            <person name="Kaprelyants A.S."/>
            <person name="Kyrpides N."/>
            <person name="Lapidus A."/>
            <person name="Lowry S.R."/>
            <person name="Lykidis A."/>
            <person name="Mahillon J."/>
            <person name="Markowitz V."/>
            <person name="Mavromatis K."/>
            <person name="Mukamolova G.V."/>
            <person name="Oren A."/>
            <person name="Rokem J.S."/>
            <person name="Smith M.C."/>
            <person name="Young D.I."/>
            <person name="Greenblatt C.L."/>
        </authorList>
    </citation>
    <scope>NUCLEOTIDE SEQUENCE [LARGE SCALE GENOMIC DNA]</scope>
    <source>
        <strain>ATCC 4698 / DSM 20030 / JCM 1464 / CCM 169 / CCUG 5858 / IAM 1056 / NBRC 3333 / NCIMB 9278 / NCTC 2665 / VKM Ac-2230</strain>
    </source>
</reference>
<dbReference type="EC" id="6.1.1.3" evidence="1"/>
<dbReference type="EMBL" id="CP001628">
    <property type="protein sequence ID" value="ACS30579.1"/>
    <property type="molecule type" value="Genomic_DNA"/>
</dbReference>
<dbReference type="RefSeq" id="WP_010078785.1">
    <property type="nucleotide sequence ID" value="NC_012803.1"/>
</dbReference>
<dbReference type="SMR" id="C5CBI2"/>
<dbReference type="STRING" id="465515.Mlut_10670"/>
<dbReference type="EnsemblBacteria" id="ACS30579">
    <property type="protein sequence ID" value="ACS30579"/>
    <property type="gene ID" value="Mlut_10670"/>
</dbReference>
<dbReference type="GeneID" id="93345225"/>
<dbReference type="KEGG" id="mlu:Mlut_10670"/>
<dbReference type="PATRIC" id="fig|465515.4.peg.1015"/>
<dbReference type="eggNOG" id="COG0441">
    <property type="taxonomic scope" value="Bacteria"/>
</dbReference>
<dbReference type="HOGENOM" id="CLU_008554_0_1_11"/>
<dbReference type="Proteomes" id="UP000000738">
    <property type="component" value="Chromosome"/>
</dbReference>
<dbReference type="GO" id="GO:0005737">
    <property type="term" value="C:cytoplasm"/>
    <property type="evidence" value="ECO:0007669"/>
    <property type="project" value="UniProtKB-SubCell"/>
</dbReference>
<dbReference type="GO" id="GO:0005524">
    <property type="term" value="F:ATP binding"/>
    <property type="evidence" value="ECO:0007669"/>
    <property type="project" value="UniProtKB-UniRule"/>
</dbReference>
<dbReference type="GO" id="GO:0046872">
    <property type="term" value="F:metal ion binding"/>
    <property type="evidence" value="ECO:0007669"/>
    <property type="project" value="UniProtKB-KW"/>
</dbReference>
<dbReference type="GO" id="GO:0004829">
    <property type="term" value="F:threonine-tRNA ligase activity"/>
    <property type="evidence" value="ECO:0007669"/>
    <property type="project" value="UniProtKB-UniRule"/>
</dbReference>
<dbReference type="GO" id="GO:0000049">
    <property type="term" value="F:tRNA binding"/>
    <property type="evidence" value="ECO:0007669"/>
    <property type="project" value="UniProtKB-KW"/>
</dbReference>
<dbReference type="GO" id="GO:0006435">
    <property type="term" value="P:threonyl-tRNA aminoacylation"/>
    <property type="evidence" value="ECO:0007669"/>
    <property type="project" value="UniProtKB-UniRule"/>
</dbReference>
<dbReference type="CDD" id="cd01667">
    <property type="entry name" value="TGS_ThrRS"/>
    <property type="match status" value="1"/>
</dbReference>
<dbReference type="CDD" id="cd00860">
    <property type="entry name" value="ThrRS_anticodon"/>
    <property type="match status" value="1"/>
</dbReference>
<dbReference type="CDD" id="cd00771">
    <property type="entry name" value="ThrRS_core"/>
    <property type="match status" value="1"/>
</dbReference>
<dbReference type="FunFam" id="3.30.54.20:FF:000003">
    <property type="entry name" value="Threonine--tRNA ligase"/>
    <property type="match status" value="1"/>
</dbReference>
<dbReference type="FunFam" id="3.30.930.10:FF:000019">
    <property type="entry name" value="Threonine--tRNA ligase"/>
    <property type="match status" value="1"/>
</dbReference>
<dbReference type="FunFam" id="3.40.50.800:FF:000001">
    <property type="entry name" value="Threonine--tRNA ligase"/>
    <property type="match status" value="1"/>
</dbReference>
<dbReference type="Gene3D" id="3.30.54.20">
    <property type="match status" value="1"/>
</dbReference>
<dbReference type="Gene3D" id="3.40.50.800">
    <property type="entry name" value="Anticodon-binding domain"/>
    <property type="match status" value="1"/>
</dbReference>
<dbReference type="Gene3D" id="3.30.930.10">
    <property type="entry name" value="Bira Bifunctional Protein, Domain 2"/>
    <property type="match status" value="1"/>
</dbReference>
<dbReference type="Gene3D" id="3.30.980.10">
    <property type="entry name" value="Threonyl-trna Synthetase, Chain A, domain 2"/>
    <property type="match status" value="1"/>
</dbReference>
<dbReference type="HAMAP" id="MF_00184">
    <property type="entry name" value="Thr_tRNA_synth"/>
    <property type="match status" value="1"/>
</dbReference>
<dbReference type="InterPro" id="IPR002314">
    <property type="entry name" value="aa-tRNA-synt_IIb"/>
</dbReference>
<dbReference type="InterPro" id="IPR006195">
    <property type="entry name" value="aa-tRNA-synth_II"/>
</dbReference>
<dbReference type="InterPro" id="IPR045864">
    <property type="entry name" value="aa-tRNA-synth_II/BPL/LPL"/>
</dbReference>
<dbReference type="InterPro" id="IPR004154">
    <property type="entry name" value="Anticodon-bd"/>
</dbReference>
<dbReference type="InterPro" id="IPR036621">
    <property type="entry name" value="Anticodon-bd_dom_sf"/>
</dbReference>
<dbReference type="InterPro" id="IPR004095">
    <property type="entry name" value="TGS"/>
</dbReference>
<dbReference type="InterPro" id="IPR002320">
    <property type="entry name" value="Thr-tRNA-ligase_IIa"/>
</dbReference>
<dbReference type="InterPro" id="IPR018163">
    <property type="entry name" value="Thr/Ala-tRNA-synth_IIc_edit"/>
</dbReference>
<dbReference type="InterPro" id="IPR047246">
    <property type="entry name" value="ThrRS_anticodon"/>
</dbReference>
<dbReference type="InterPro" id="IPR033728">
    <property type="entry name" value="ThrRS_core"/>
</dbReference>
<dbReference type="InterPro" id="IPR012947">
    <property type="entry name" value="tRNA_SAD"/>
</dbReference>
<dbReference type="NCBIfam" id="TIGR00418">
    <property type="entry name" value="thrS"/>
    <property type="match status" value="1"/>
</dbReference>
<dbReference type="PANTHER" id="PTHR11451:SF44">
    <property type="entry name" value="THREONINE--TRNA LIGASE, CHLOROPLASTIC_MITOCHONDRIAL 2"/>
    <property type="match status" value="1"/>
</dbReference>
<dbReference type="PANTHER" id="PTHR11451">
    <property type="entry name" value="THREONINE-TRNA LIGASE"/>
    <property type="match status" value="1"/>
</dbReference>
<dbReference type="Pfam" id="PF03129">
    <property type="entry name" value="HGTP_anticodon"/>
    <property type="match status" value="1"/>
</dbReference>
<dbReference type="Pfam" id="PF00587">
    <property type="entry name" value="tRNA-synt_2b"/>
    <property type="match status" value="1"/>
</dbReference>
<dbReference type="Pfam" id="PF07973">
    <property type="entry name" value="tRNA_SAD"/>
    <property type="match status" value="1"/>
</dbReference>
<dbReference type="PRINTS" id="PR01047">
    <property type="entry name" value="TRNASYNTHTHR"/>
</dbReference>
<dbReference type="SMART" id="SM00863">
    <property type="entry name" value="tRNA_SAD"/>
    <property type="match status" value="1"/>
</dbReference>
<dbReference type="SUPFAM" id="SSF52954">
    <property type="entry name" value="Class II aaRS ABD-related"/>
    <property type="match status" value="1"/>
</dbReference>
<dbReference type="SUPFAM" id="SSF55681">
    <property type="entry name" value="Class II aaRS and biotin synthetases"/>
    <property type="match status" value="1"/>
</dbReference>
<dbReference type="SUPFAM" id="SSF55186">
    <property type="entry name" value="ThrRS/AlaRS common domain"/>
    <property type="match status" value="1"/>
</dbReference>
<dbReference type="PROSITE" id="PS50862">
    <property type="entry name" value="AA_TRNA_LIGASE_II"/>
    <property type="match status" value="1"/>
</dbReference>
<dbReference type="PROSITE" id="PS51880">
    <property type="entry name" value="TGS"/>
    <property type="match status" value="1"/>
</dbReference>
<comment type="function">
    <text evidence="1">Catalyzes the attachment of threonine to tRNA(Thr) in a two-step reaction: L-threonine is first activated by ATP to form Thr-AMP and then transferred to the acceptor end of tRNA(Thr). Also edits incorrectly charged L-seryl-tRNA(Thr).</text>
</comment>
<comment type="catalytic activity">
    <reaction evidence="1">
        <text>tRNA(Thr) + L-threonine + ATP = L-threonyl-tRNA(Thr) + AMP + diphosphate + H(+)</text>
        <dbReference type="Rhea" id="RHEA:24624"/>
        <dbReference type="Rhea" id="RHEA-COMP:9670"/>
        <dbReference type="Rhea" id="RHEA-COMP:9704"/>
        <dbReference type="ChEBI" id="CHEBI:15378"/>
        <dbReference type="ChEBI" id="CHEBI:30616"/>
        <dbReference type="ChEBI" id="CHEBI:33019"/>
        <dbReference type="ChEBI" id="CHEBI:57926"/>
        <dbReference type="ChEBI" id="CHEBI:78442"/>
        <dbReference type="ChEBI" id="CHEBI:78534"/>
        <dbReference type="ChEBI" id="CHEBI:456215"/>
        <dbReference type="EC" id="6.1.1.3"/>
    </reaction>
</comment>
<comment type="cofactor">
    <cofactor evidence="1">
        <name>Zn(2+)</name>
        <dbReference type="ChEBI" id="CHEBI:29105"/>
    </cofactor>
    <text evidence="1">Binds 1 zinc ion per subunit.</text>
</comment>
<comment type="subunit">
    <text evidence="1">Homodimer.</text>
</comment>
<comment type="subcellular location">
    <subcellularLocation>
        <location evidence="1">Cytoplasm</location>
    </subcellularLocation>
</comment>
<comment type="similarity">
    <text evidence="1">Belongs to the class-II aminoacyl-tRNA synthetase family.</text>
</comment>
<proteinExistence type="inferred from homology"/>
<accession>C5CBI2</accession>
<protein>
    <recommendedName>
        <fullName evidence="1">Threonine--tRNA ligase</fullName>
        <ecNumber evidence="1">6.1.1.3</ecNumber>
    </recommendedName>
    <alternativeName>
        <fullName evidence="1">Threonyl-tRNA synthetase</fullName>
        <shortName evidence="1">ThrRS</shortName>
    </alternativeName>
</protein>
<name>SYT_MICLC</name>
<evidence type="ECO:0000255" key="1">
    <source>
        <dbReference type="HAMAP-Rule" id="MF_00184"/>
    </source>
</evidence>
<evidence type="ECO:0000255" key="2">
    <source>
        <dbReference type="PROSITE-ProRule" id="PRU01228"/>
    </source>
</evidence>
<feature type="chain" id="PRO_1000203912" description="Threonine--tRNA ligase">
    <location>
        <begin position="1"/>
        <end position="672"/>
    </location>
</feature>
<feature type="domain" description="TGS" evidence="2">
    <location>
        <begin position="2"/>
        <end position="60"/>
    </location>
</feature>
<feature type="region of interest" description="Catalytic" evidence="1">
    <location>
        <begin position="260"/>
        <end position="567"/>
    </location>
</feature>
<feature type="binding site" evidence="1">
    <location>
        <position position="366"/>
    </location>
    <ligand>
        <name>Zn(2+)</name>
        <dbReference type="ChEBI" id="CHEBI:29105"/>
    </ligand>
</feature>
<feature type="binding site" evidence="1">
    <location>
        <position position="417"/>
    </location>
    <ligand>
        <name>Zn(2+)</name>
        <dbReference type="ChEBI" id="CHEBI:29105"/>
    </ligand>
</feature>
<feature type="binding site" evidence="1">
    <location>
        <position position="544"/>
    </location>
    <ligand>
        <name>Zn(2+)</name>
        <dbReference type="ChEBI" id="CHEBI:29105"/>
    </ligand>
</feature>
<organism>
    <name type="scientific">Micrococcus luteus (strain ATCC 4698 / DSM 20030 / JCM 1464 / CCM 169 / CCUG 5858 / IAM 1056 / NBRC 3333 / NCIMB 9278 / NCTC 2665 / VKM Ac-2230)</name>
    <name type="common">Micrococcus lysodeikticus</name>
    <dbReference type="NCBI Taxonomy" id="465515"/>
    <lineage>
        <taxon>Bacteria</taxon>
        <taxon>Bacillati</taxon>
        <taxon>Actinomycetota</taxon>
        <taxon>Actinomycetes</taxon>
        <taxon>Micrococcales</taxon>
        <taxon>Micrococcaceae</taxon>
        <taxon>Micrococcus</taxon>
    </lineage>
</organism>
<sequence length="672" mass="75653">MSEPKNILLTVDGELREVTHGTTGLDLFREKPTTAVMRVDGLLWDLAREIPAGASVESVDITEPEGLEVLRHSTAHVMAQAVQQLRPGAKLGIGPYITDGFYFDFDVDDPFTPEDLKQISSLMQKIVKSGQAFRRRVVDEETARAEMADEPYKLELLGKKDAADTAGEGASVEVGAGEITIYDNVDRKTGDAVWCDLCRGPHLPSTKLIGNGFALTRSAAAYWLGNEKNKQLQRIYGTAWASKDDLKAYQERLAEAERRDHRKLGAELDLFSFPDELGSGLPVFHPRGGIIRKEMEDYSRRRHTEAGYEFVYTPHITKQHLYEVSGHLDWYANGMFPPMHIDEVRDPETGEITRQGQNYYLKPMNCPMHNLIYRSRGRSYRELPLRLFEFGSVYRYEKSGVVHGLTRVRGMTQDDAHIYCTREQMKEELTTTLNFVLDLLKDYGLNDFHLELSTKDPEKFVGSDEIWEEATRTLAEVAEASGLQLVPDPGGAAFYGPKISVQARDAIGRTWQMSTIQLDFNLPERFDLEYQAADGTRQRPVMIHRALFGSIERFLGVLTEHYAGAFPAWLAPEQVVAIPVAEAFNDYLDDVVAKLRAEGIRARLDDSSDRFPKKIRTAAKEKAPFVLIAGGEDREAGAVSFRFRDGTQDNGVPVEEAIERIVKAVREREVTP</sequence>
<keyword id="KW-0030">Aminoacyl-tRNA synthetase</keyword>
<keyword id="KW-0067">ATP-binding</keyword>
<keyword id="KW-0963">Cytoplasm</keyword>
<keyword id="KW-0436">Ligase</keyword>
<keyword id="KW-0479">Metal-binding</keyword>
<keyword id="KW-0547">Nucleotide-binding</keyword>
<keyword id="KW-0648">Protein biosynthesis</keyword>
<keyword id="KW-1185">Reference proteome</keyword>
<keyword id="KW-0694">RNA-binding</keyword>
<keyword id="KW-0820">tRNA-binding</keyword>
<keyword id="KW-0862">Zinc</keyword>
<gene>
    <name evidence="1" type="primary">thrS</name>
    <name type="ordered locus">Mlut_10670</name>
</gene>